<feature type="signal peptide" evidence="3">
    <location>
        <begin position="1"/>
        <end position="18"/>
    </location>
</feature>
<feature type="propeptide" id="PRO_0000019609" evidence="3">
    <location>
        <begin position="19"/>
        <end position="121"/>
    </location>
</feature>
<feature type="chain" id="PRO_0000019610" description="Beta-nerve growth factor">
    <location>
        <begin position="122"/>
        <end position="241"/>
    </location>
</feature>
<feature type="binding site" description="in other chain" evidence="2">
    <location>
        <position position="173"/>
    </location>
    <ligand>
        <name>a 1-acyl-sn-glycero-3-phospho-(1D-myo-inositol)</name>
        <dbReference type="ChEBI" id="CHEBI:64771"/>
        <note>ligand shared between dimeric partners</note>
    </ligand>
</feature>
<feature type="binding site" evidence="2">
    <location>
        <position position="209"/>
    </location>
    <ligand>
        <name>a 1-acyl-sn-glycero-3-phospho-(1D-myo-inositol)</name>
        <dbReference type="ChEBI" id="CHEBI:64771"/>
        <note>ligand shared between dimeric partners</note>
    </ligand>
</feature>
<feature type="binding site" evidence="2">
    <location>
        <position position="209"/>
    </location>
    <ligand>
        <name>a 1-acyl-sn-glycero-3-phospho-L-serine</name>
        <dbReference type="ChEBI" id="CHEBI:64379"/>
        <note>ligand shared between dimeric partners</note>
    </ligand>
</feature>
<feature type="glycosylation site" description="N-linked (GlcNAc...) asparagine" evidence="3">
    <location>
        <position position="69"/>
    </location>
</feature>
<feature type="glycosylation site" description="N-linked (GlcNAc...) asparagine" evidence="3">
    <location>
        <position position="114"/>
    </location>
</feature>
<feature type="glycosylation site" description="N-linked (GlcNAc...) asparagine" evidence="3">
    <location>
        <position position="166"/>
    </location>
</feature>
<feature type="disulfide bond" evidence="1">
    <location>
        <begin position="136"/>
        <end position="201"/>
    </location>
</feature>
<feature type="disulfide bond" evidence="1">
    <location>
        <begin position="179"/>
        <end position="229"/>
    </location>
</feature>
<feature type="disulfide bond" evidence="1">
    <location>
        <begin position="189"/>
        <end position="231"/>
    </location>
</feature>
<protein>
    <recommendedName>
        <fullName>Beta-nerve growth factor</fullName>
        <shortName>Beta-NGF</shortName>
    </recommendedName>
</protein>
<name>NGF_RAT</name>
<dbReference type="EMBL" id="M36589">
    <property type="protein sequence ID" value="AAA41697.1"/>
    <property type="status" value="ALT_INIT"/>
    <property type="molecule type" value="Genomic_DNA"/>
</dbReference>
<dbReference type="PIR" id="I56570">
    <property type="entry name" value="I56570"/>
</dbReference>
<dbReference type="RefSeq" id="NP_001263984.1">
    <property type="nucleotide sequence ID" value="NM_001277055.1"/>
</dbReference>
<dbReference type="RefSeq" id="XP_006233114.1">
    <property type="nucleotide sequence ID" value="XM_006233052.3"/>
</dbReference>
<dbReference type="RefSeq" id="XP_006233115.1">
    <property type="nucleotide sequence ID" value="XM_006233053.2"/>
</dbReference>
<dbReference type="RefSeq" id="XP_063137977.1">
    <property type="nucleotide sequence ID" value="XM_063281907.1"/>
</dbReference>
<dbReference type="SMR" id="P25427"/>
<dbReference type="FunCoup" id="P25427">
    <property type="interactions" value="475"/>
</dbReference>
<dbReference type="STRING" id="10116.ENSRNOP00000072445"/>
<dbReference type="BindingDB" id="P25427"/>
<dbReference type="GlyCosmos" id="P25427">
    <property type="glycosylation" value="3 sites, No reported glycans"/>
</dbReference>
<dbReference type="GlyGen" id="P25427">
    <property type="glycosylation" value="4 sites"/>
</dbReference>
<dbReference type="PhosphoSitePlus" id="P25427"/>
<dbReference type="PaxDb" id="10116-ENSRNOP00000022200"/>
<dbReference type="ABCD" id="P25427">
    <property type="antibodies" value="85 sequenced antibodies"/>
</dbReference>
<dbReference type="Ensembl" id="ENSRNOT00000022200.7">
    <property type="protein sequence ID" value="ENSRNOP00000022200.5"/>
    <property type="gene ID" value="ENSRNOG00000016571.7"/>
</dbReference>
<dbReference type="Ensembl" id="ENSRNOT00000116899.1">
    <property type="protein sequence ID" value="ENSRNOP00000097792.1"/>
    <property type="gene ID" value="ENSRNOG00000016571.7"/>
</dbReference>
<dbReference type="GeneID" id="310738"/>
<dbReference type="KEGG" id="rno:310738"/>
<dbReference type="AGR" id="RGD:1598328"/>
<dbReference type="CTD" id="4803"/>
<dbReference type="RGD" id="1598328">
    <property type="gene designation" value="Ngf"/>
</dbReference>
<dbReference type="eggNOG" id="ENOG502RYPU">
    <property type="taxonomic scope" value="Eukaryota"/>
</dbReference>
<dbReference type="GeneTree" id="ENSGT00390000007725"/>
<dbReference type="HOGENOM" id="CLU_059942_1_1_1"/>
<dbReference type="InParanoid" id="P25427"/>
<dbReference type="OMA" id="MPMLFYT"/>
<dbReference type="PhylomeDB" id="P25427"/>
<dbReference type="Reactome" id="R-RNO-167060">
    <property type="pathway name" value="NGF processing"/>
</dbReference>
<dbReference type="Reactome" id="R-RNO-170968">
    <property type="pathway name" value="Frs2-mediated activation"/>
</dbReference>
<dbReference type="Reactome" id="R-RNO-170984">
    <property type="pathway name" value="ARMS-mediated activation"/>
</dbReference>
<dbReference type="Reactome" id="R-RNO-177504">
    <property type="pathway name" value="Retrograde neurotrophin signalling"/>
</dbReference>
<dbReference type="Reactome" id="R-RNO-187042">
    <property type="pathway name" value="TRKA activation by NGF"/>
</dbReference>
<dbReference type="Reactome" id="R-RNO-198203">
    <property type="pathway name" value="PI3K/AKT activation"/>
</dbReference>
<dbReference type="Reactome" id="R-RNO-205017">
    <property type="pathway name" value="NFG and proNGF binds to p75NTR"/>
</dbReference>
<dbReference type="Reactome" id="R-RNO-205025">
    <property type="pathway name" value="NADE modulates death signalling"/>
</dbReference>
<dbReference type="Reactome" id="R-RNO-205043">
    <property type="pathway name" value="NRIF signals cell death from the nucleus"/>
</dbReference>
<dbReference type="Reactome" id="R-RNO-209543">
    <property type="pathway name" value="p75NTR recruits signalling complexes"/>
</dbReference>
<dbReference type="Reactome" id="R-RNO-209560">
    <property type="pathway name" value="NF-kB is activated and signals survival"/>
</dbReference>
<dbReference type="Reactome" id="R-RNO-209563">
    <property type="pathway name" value="Axonal growth stimulation"/>
</dbReference>
<dbReference type="PRO" id="PR:P25427"/>
<dbReference type="Proteomes" id="UP000002494">
    <property type="component" value="Chromosome 2"/>
</dbReference>
<dbReference type="Bgee" id="ENSRNOG00000016571">
    <property type="expression patterns" value="Expressed in heart and 16 other cell types or tissues"/>
</dbReference>
<dbReference type="ExpressionAtlas" id="P25427">
    <property type="expression patterns" value="baseline and differential"/>
</dbReference>
<dbReference type="GO" id="GO:0030424">
    <property type="term" value="C:axon"/>
    <property type="evidence" value="ECO:0000318"/>
    <property type="project" value="GO_Central"/>
</dbReference>
<dbReference type="GO" id="GO:0030425">
    <property type="term" value="C:dendrite"/>
    <property type="evidence" value="ECO:0000318"/>
    <property type="project" value="GO_Central"/>
</dbReference>
<dbReference type="GO" id="GO:0005788">
    <property type="term" value="C:endoplasmic reticulum lumen"/>
    <property type="evidence" value="ECO:0000304"/>
    <property type="project" value="Reactome"/>
</dbReference>
<dbReference type="GO" id="GO:0031904">
    <property type="term" value="C:endosome lumen"/>
    <property type="evidence" value="ECO:0007669"/>
    <property type="project" value="UniProtKB-SubCell"/>
</dbReference>
<dbReference type="GO" id="GO:0005576">
    <property type="term" value="C:extracellular region"/>
    <property type="evidence" value="ECO:0000304"/>
    <property type="project" value="Reactome"/>
</dbReference>
<dbReference type="GO" id="GO:0005615">
    <property type="term" value="C:extracellular space"/>
    <property type="evidence" value="ECO:0000314"/>
    <property type="project" value="RGD"/>
</dbReference>
<dbReference type="GO" id="GO:0005796">
    <property type="term" value="C:Golgi lumen"/>
    <property type="evidence" value="ECO:0000304"/>
    <property type="project" value="Reactome"/>
</dbReference>
<dbReference type="GO" id="GO:0008021">
    <property type="term" value="C:synaptic vesicle"/>
    <property type="evidence" value="ECO:0000318"/>
    <property type="project" value="GO_Central"/>
</dbReference>
<dbReference type="GO" id="GO:0008083">
    <property type="term" value="F:growth factor activity"/>
    <property type="evidence" value="ECO:0000318"/>
    <property type="project" value="GO_Central"/>
</dbReference>
<dbReference type="GO" id="GO:0008289">
    <property type="term" value="F:lipid binding"/>
    <property type="evidence" value="ECO:0007669"/>
    <property type="project" value="UniProtKB-KW"/>
</dbReference>
<dbReference type="GO" id="GO:0008191">
    <property type="term" value="F:metalloendopeptidase inhibitor activity"/>
    <property type="evidence" value="ECO:0000250"/>
    <property type="project" value="UniProtKB"/>
</dbReference>
<dbReference type="GO" id="GO:0005163">
    <property type="term" value="F:nerve growth factor receptor binding"/>
    <property type="evidence" value="ECO:0000266"/>
    <property type="project" value="RGD"/>
</dbReference>
<dbReference type="GO" id="GO:0030297">
    <property type="term" value="F:transmembrane receptor protein tyrosine kinase activator activity"/>
    <property type="evidence" value="ECO:0000266"/>
    <property type="project" value="RGD"/>
</dbReference>
<dbReference type="GO" id="GO:0008344">
    <property type="term" value="P:adult locomotory behavior"/>
    <property type="evidence" value="ECO:0000315"/>
    <property type="project" value="RGD"/>
</dbReference>
<dbReference type="GO" id="GO:0048675">
    <property type="term" value="P:axon extension"/>
    <property type="evidence" value="ECO:0000266"/>
    <property type="project" value="RGD"/>
</dbReference>
<dbReference type="GO" id="GO:0008283">
    <property type="term" value="P:cell population proliferation"/>
    <property type="evidence" value="ECO:0000315"/>
    <property type="project" value="RGD"/>
</dbReference>
<dbReference type="GO" id="GO:0021846">
    <property type="term" value="P:cell proliferation in forebrain"/>
    <property type="evidence" value="ECO:0000315"/>
    <property type="project" value="RGD"/>
</dbReference>
<dbReference type="GO" id="GO:0007169">
    <property type="term" value="P:cell surface receptor protein tyrosine kinase signaling pathway"/>
    <property type="evidence" value="ECO:0000318"/>
    <property type="project" value="GO_Central"/>
</dbReference>
<dbReference type="GO" id="GO:0007623">
    <property type="term" value="P:circadian rhythm"/>
    <property type="evidence" value="ECO:0000266"/>
    <property type="project" value="RGD"/>
</dbReference>
<dbReference type="GO" id="GO:0097192">
    <property type="term" value="P:extrinsic apoptotic signaling pathway in absence of ligand"/>
    <property type="evidence" value="ECO:0000266"/>
    <property type="project" value="RGD"/>
</dbReference>
<dbReference type="GO" id="GO:0008625">
    <property type="term" value="P:extrinsic apoptotic signaling pathway via death domain receptors"/>
    <property type="evidence" value="ECO:0000266"/>
    <property type="project" value="RGD"/>
</dbReference>
<dbReference type="GO" id="GO:0007613">
    <property type="term" value="P:memory"/>
    <property type="evidence" value="ECO:0000315"/>
    <property type="project" value="RGD"/>
</dbReference>
<dbReference type="GO" id="GO:0050804">
    <property type="term" value="P:modulation of chemical synaptic transmission"/>
    <property type="evidence" value="ECO:0000318"/>
    <property type="project" value="GO_Central"/>
</dbReference>
<dbReference type="GO" id="GO:1902236">
    <property type="term" value="P:negative regulation of endoplasmic reticulum stress-induced intrinsic apoptotic signaling pathway"/>
    <property type="evidence" value="ECO:0000303"/>
    <property type="project" value="ParkinsonsUK-UCL"/>
</dbReference>
<dbReference type="GO" id="GO:0043524">
    <property type="term" value="P:negative regulation of neuron apoptotic process"/>
    <property type="evidence" value="ECO:0000315"/>
    <property type="project" value="UniProtKB"/>
</dbReference>
<dbReference type="GO" id="GO:2000675">
    <property type="term" value="P:negative regulation of type B pancreatic cell apoptotic process"/>
    <property type="evidence" value="ECO:0000315"/>
    <property type="project" value="RGD"/>
</dbReference>
<dbReference type="GO" id="GO:0021675">
    <property type="term" value="P:nerve development"/>
    <property type="evidence" value="ECO:0000318"/>
    <property type="project" value="GO_Central"/>
</dbReference>
<dbReference type="GO" id="GO:0038180">
    <property type="term" value="P:nerve growth factor signaling pathway"/>
    <property type="evidence" value="ECO:0000266"/>
    <property type="project" value="RGD"/>
</dbReference>
<dbReference type="GO" id="GO:0051402">
    <property type="term" value="P:neuron apoptotic process"/>
    <property type="evidence" value="ECO:0000266"/>
    <property type="project" value="RGD"/>
</dbReference>
<dbReference type="GO" id="GO:0030182">
    <property type="term" value="P:neuron differentiation"/>
    <property type="evidence" value="ECO:0000315"/>
    <property type="project" value="RGD"/>
</dbReference>
<dbReference type="GO" id="GO:0031175">
    <property type="term" value="P:neuron projection development"/>
    <property type="evidence" value="ECO:0000314"/>
    <property type="project" value="RGD"/>
</dbReference>
<dbReference type="GO" id="GO:0048812">
    <property type="term" value="P:neuron projection morphogenesis"/>
    <property type="evidence" value="ECO:0000266"/>
    <property type="project" value="RGD"/>
</dbReference>
<dbReference type="GO" id="GO:0007422">
    <property type="term" value="P:peripheral nervous system development"/>
    <property type="evidence" value="ECO:0000266"/>
    <property type="project" value="RGD"/>
</dbReference>
<dbReference type="GO" id="GO:0045773">
    <property type="term" value="P:positive regulation of axon extension"/>
    <property type="evidence" value="ECO:0000266"/>
    <property type="project" value="RGD"/>
</dbReference>
<dbReference type="GO" id="GO:0030307">
    <property type="term" value="P:positive regulation of cell growth"/>
    <property type="evidence" value="ECO:0000314"/>
    <property type="project" value="RGD"/>
</dbReference>
<dbReference type="GO" id="GO:0008284">
    <property type="term" value="P:positive regulation of cell population proliferation"/>
    <property type="evidence" value="ECO:0000314"/>
    <property type="project" value="RGD"/>
</dbReference>
<dbReference type="GO" id="GO:0048672">
    <property type="term" value="P:positive regulation of collateral sprouting"/>
    <property type="evidence" value="ECO:0000266"/>
    <property type="project" value="RGD"/>
</dbReference>
<dbReference type="GO" id="GO:0051091">
    <property type="term" value="P:positive regulation of DNA-binding transcription factor activity"/>
    <property type="evidence" value="ECO:0000314"/>
    <property type="project" value="MGI"/>
</dbReference>
<dbReference type="GO" id="GO:0070374">
    <property type="term" value="P:positive regulation of ERK1 and ERK2 cascade"/>
    <property type="evidence" value="ECO:0000314"/>
    <property type="project" value="RGD"/>
</dbReference>
<dbReference type="GO" id="GO:0010628">
    <property type="term" value="P:positive regulation of gene expression"/>
    <property type="evidence" value="ECO:0000266"/>
    <property type="project" value="RGD"/>
</dbReference>
<dbReference type="GO" id="GO:0045666">
    <property type="term" value="P:positive regulation of neuron differentiation"/>
    <property type="evidence" value="ECO:0000314"/>
    <property type="project" value="RGD"/>
</dbReference>
<dbReference type="GO" id="GO:0014042">
    <property type="term" value="P:positive regulation of neuron maturation"/>
    <property type="evidence" value="ECO:0000266"/>
    <property type="project" value="RGD"/>
</dbReference>
<dbReference type="GO" id="GO:0010976">
    <property type="term" value="P:positive regulation of neuron projection development"/>
    <property type="evidence" value="ECO:0000266"/>
    <property type="project" value="RGD"/>
</dbReference>
<dbReference type="GO" id="GO:0051388">
    <property type="term" value="P:positive regulation of neurotrophin TRK receptor signaling pathway"/>
    <property type="evidence" value="ECO:0000314"/>
    <property type="project" value="MGI"/>
</dbReference>
<dbReference type="GO" id="GO:0031954">
    <property type="term" value="P:positive regulation of protein autophosphorylation"/>
    <property type="evidence" value="ECO:0000314"/>
    <property type="project" value="MGI"/>
</dbReference>
<dbReference type="GO" id="GO:0032092">
    <property type="term" value="P:positive regulation of protein binding"/>
    <property type="evidence" value="ECO:0000315"/>
    <property type="project" value="UniProtKB"/>
</dbReference>
<dbReference type="GO" id="GO:0001934">
    <property type="term" value="P:positive regulation of protein phosphorylation"/>
    <property type="evidence" value="ECO:0000314"/>
    <property type="project" value="UniProtKB"/>
</dbReference>
<dbReference type="GO" id="GO:0031398">
    <property type="term" value="P:positive regulation of protein ubiquitination"/>
    <property type="evidence" value="ECO:0000266"/>
    <property type="project" value="RGD"/>
</dbReference>
<dbReference type="GO" id="GO:0046579">
    <property type="term" value="P:positive regulation of Ras protein signal transduction"/>
    <property type="evidence" value="ECO:0000266"/>
    <property type="project" value="RGD"/>
</dbReference>
<dbReference type="GO" id="GO:2000648">
    <property type="term" value="P:positive regulation of stem cell proliferation"/>
    <property type="evidence" value="ECO:0000314"/>
    <property type="project" value="RGD"/>
</dbReference>
<dbReference type="GO" id="GO:0045664">
    <property type="term" value="P:regulation of neuron differentiation"/>
    <property type="evidence" value="ECO:0000266"/>
    <property type="project" value="RGD"/>
</dbReference>
<dbReference type="GO" id="GO:0046928">
    <property type="term" value="P:regulation of neurotransmitter secretion"/>
    <property type="evidence" value="ECO:0000266"/>
    <property type="project" value="RGD"/>
</dbReference>
<dbReference type="GO" id="GO:0051279">
    <property type="term" value="P:regulation of release of sequestered calcium ion into cytosol"/>
    <property type="evidence" value="ECO:0000266"/>
    <property type="project" value="RGD"/>
</dbReference>
<dbReference type="GO" id="GO:0051602">
    <property type="term" value="P:response to electrical stimulus"/>
    <property type="evidence" value="ECO:0000270"/>
    <property type="project" value="RGD"/>
</dbReference>
<dbReference type="GO" id="GO:0051384">
    <property type="term" value="P:response to glucocorticoid"/>
    <property type="evidence" value="ECO:0000270"/>
    <property type="project" value="RGD"/>
</dbReference>
<dbReference type="GO" id="GO:0032496">
    <property type="term" value="P:response to lipopolysaccharide"/>
    <property type="evidence" value="ECO:0000270"/>
    <property type="project" value="RGD"/>
</dbReference>
<dbReference type="GO" id="GO:0009612">
    <property type="term" value="P:response to mechanical stimulus"/>
    <property type="evidence" value="ECO:0000270"/>
    <property type="project" value="RGD"/>
</dbReference>
<dbReference type="GO" id="GO:0035094">
    <property type="term" value="P:response to nicotine"/>
    <property type="evidence" value="ECO:0000270"/>
    <property type="project" value="RGD"/>
</dbReference>
<dbReference type="GO" id="GO:0010193">
    <property type="term" value="P:response to ozone"/>
    <property type="evidence" value="ECO:0000270"/>
    <property type="project" value="RGD"/>
</dbReference>
<dbReference type="GO" id="GO:0043434">
    <property type="term" value="P:response to peptide hormone"/>
    <property type="evidence" value="ECO:0000270"/>
    <property type="project" value="RGD"/>
</dbReference>
<dbReference type="GO" id="GO:0009410">
    <property type="term" value="P:response to xenobiotic stimulus"/>
    <property type="evidence" value="ECO:0000270"/>
    <property type="project" value="RGD"/>
</dbReference>
<dbReference type="GO" id="GO:0062036">
    <property type="term" value="P:sensory perception of hot stimulus"/>
    <property type="evidence" value="ECO:0000314"/>
    <property type="project" value="RGD"/>
</dbReference>
<dbReference type="GO" id="GO:0019233">
    <property type="term" value="P:sensory perception of pain"/>
    <property type="evidence" value="ECO:0000266"/>
    <property type="project" value="RGD"/>
</dbReference>
<dbReference type="GO" id="GO:0007283">
    <property type="term" value="P:spermatogenesis"/>
    <property type="evidence" value="ECO:0000270"/>
    <property type="project" value="RGD"/>
</dbReference>
<dbReference type="FunFam" id="2.10.90.10:FF:000002">
    <property type="entry name" value="Brain-derived neurotrophic factor"/>
    <property type="match status" value="1"/>
</dbReference>
<dbReference type="Gene3D" id="2.10.90.10">
    <property type="entry name" value="Cystine-knot cytokines"/>
    <property type="match status" value="1"/>
</dbReference>
<dbReference type="InterPro" id="IPR029034">
    <property type="entry name" value="Cystine-knot_cytokine"/>
</dbReference>
<dbReference type="InterPro" id="IPR020408">
    <property type="entry name" value="Nerve_growth_factor-like"/>
</dbReference>
<dbReference type="InterPro" id="IPR002072">
    <property type="entry name" value="Nerve_growth_factor-rel"/>
</dbReference>
<dbReference type="InterPro" id="IPR020425">
    <property type="entry name" value="Nerve_growth_factor_bsu"/>
</dbReference>
<dbReference type="InterPro" id="IPR020437">
    <property type="entry name" value="Nerve_growth_factor_bsu_mml"/>
</dbReference>
<dbReference type="InterPro" id="IPR019846">
    <property type="entry name" value="Nerve_growth_factor_CS"/>
</dbReference>
<dbReference type="PANTHER" id="PTHR11589:SF10">
    <property type="entry name" value="BETA-NERVE GROWTH FACTOR"/>
    <property type="match status" value="1"/>
</dbReference>
<dbReference type="PANTHER" id="PTHR11589">
    <property type="entry name" value="NERVE GROWTH FACTOR NGF -RELATED"/>
    <property type="match status" value="1"/>
</dbReference>
<dbReference type="Pfam" id="PF00243">
    <property type="entry name" value="NGF"/>
    <property type="match status" value="1"/>
</dbReference>
<dbReference type="PIRSF" id="PIRSF001789">
    <property type="entry name" value="NGF"/>
    <property type="match status" value="1"/>
</dbReference>
<dbReference type="PRINTS" id="PR01925">
    <property type="entry name" value="MAMLNGFBETA"/>
</dbReference>
<dbReference type="PRINTS" id="PR00268">
    <property type="entry name" value="NGF"/>
</dbReference>
<dbReference type="PRINTS" id="PR01913">
    <property type="entry name" value="NGFBETA"/>
</dbReference>
<dbReference type="SMART" id="SM00140">
    <property type="entry name" value="NGF"/>
    <property type="match status" value="1"/>
</dbReference>
<dbReference type="SUPFAM" id="SSF57501">
    <property type="entry name" value="Cystine-knot cytokines"/>
    <property type="match status" value="1"/>
</dbReference>
<dbReference type="PROSITE" id="PS00248">
    <property type="entry name" value="NGF_1"/>
    <property type="match status" value="1"/>
</dbReference>
<dbReference type="PROSITE" id="PS50270">
    <property type="entry name" value="NGF_2"/>
    <property type="match status" value="1"/>
</dbReference>
<evidence type="ECO:0000250" key="1">
    <source>
        <dbReference type="UniProtKB" id="P01138"/>
    </source>
</evidence>
<evidence type="ECO:0000250" key="2">
    <source>
        <dbReference type="UniProtKB" id="P01139"/>
    </source>
</evidence>
<evidence type="ECO:0000255" key="3"/>
<evidence type="ECO:0000269" key="4">
    <source>
    </source>
</evidence>
<evidence type="ECO:0000305" key="5"/>
<sequence>MSMLFYTLITAFLIGVQAEPYTDSNVPEGDSVPEAHWTKLQHSLDTALRRARSAPAEPIAARVTGQTRNITVDPKLFKKRRLRSPRVLFSTQPPPTSSDTLDLDFQAHGTISFNRTHRSKRSSTHPVFHMGEFSVCDSVSVWVGDKTTATDIKGKEVTVLGEVNINNSVFKQYFFETKCRAPNPVESGCRGIDSKHWNSYCTTTHTFVKALTTDDKQAAWRFIRIDTACVCVLSRKAARRG</sequence>
<keyword id="KW-0165">Cleavage on pair of basic residues</keyword>
<keyword id="KW-1015">Disulfide bond</keyword>
<keyword id="KW-0967">Endosome</keyword>
<keyword id="KW-0325">Glycoprotein</keyword>
<keyword id="KW-0339">Growth factor</keyword>
<keyword id="KW-0446">Lipid-binding</keyword>
<keyword id="KW-0481">Metalloenzyme inhibitor</keyword>
<keyword id="KW-0483">Metalloprotease inhibitor</keyword>
<keyword id="KW-0646">Protease inhibitor</keyword>
<keyword id="KW-1185">Reference proteome</keyword>
<keyword id="KW-0964">Secreted</keyword>
<keyword id="KW-0732">Signal</keyword>
<reference key="1">
    <citation type="journal article" date="1988" name="J. Neurosci. Res.">
        <title>Rat beta-nerve growth factor sequence and site of synthesis in the adult hippocampus.</title>
        <authorList>
            <person name="Whittemore S.R."/>
            <person name="Friedman P.L."/>
            <person name="Larhammar D.G."/>
            <person name="Persson H."/>
            <person name="Gonzalez-Carvajal M."/>
            <person name="Holets V.R."/>
        </authorList>
    </citation>
    <scope>NUCLEOTIDE SEQUENCE [GENOMIC DNA]</scope>
    <scope>TISSUE SPECIFICITY</scope>
</reference>
<reference key="2">
    <citation type="journal article" date="1991" name="Neuron">
        <title>Evolutionary studies of the nerve growth factor family reveal a novel member abundantly expressed in Xenopus ovary.</title>
        <authorList>
            <person name="Hallboeoek F."/>
            <person name="Ibanez C.F."/>
            <person name="Persson H."/>
        </authorList>
    </citation>
    <scope>NUCLEOTIDE SEQUENCE [GENOMIC DNA] OF 178-219</scope>
    <source>
        <strain>Sprague-Dawley</strain>
        <tissue>Liver</tissue>
    </source>
</reference>
<comment type="function">
    <text evidence="1 2">Nerve growth factor is important for the development and maintenance of the sympathetic and sensory nervous systems. Extracellular ligand for the NTRK1 and NGFR receptors, activates cellular signaling cascades to regulate neuronal proliferation, differentiation and survival (By similarity). The immature NGF precursor (proNGF) functions as a ligand for the heterodimeric receptor formed by SORCS2 and NGFR, and activates cellular signaling cascades that lead to inactivation of RAC1 and/or RAC2, reorganization of the actin cytoskeleton and neuronal growth cone collapse. In contrast to mature NGF, the precursor form (proNGF) promotes neuronal apoptosis (in vitro) (By similarity). Inhibits metalloproteinase-dependent proteolysis of platelet glycoprotein VI (By similarity). Binds lysophosphatidylinositol and lysophosphatidylserine between the two chains of the homodimer. The lipid-bound form promotes histamine relase from mast cells, contrary to the lipid-free form (By similarity).</text>
</comment>
<comment type="subunit">
    <text evidence="1 2">Homodimer. The homodimer interacts with a single NTRK1 chain. The homodimer interacts with a single NGFR chain (By similarity). The NGF dimer interacts with a single SORCS2 chain (via extracellular domain). The NGF precursor (proNGF) binds to a receptor complex formed by SORT1 and NGFR, which leads to NGF endocytosis. Both mature NGF and the immature NGF precursor (proNGF) interact with SORCS2 and with the heterodimer formed by SORCS2 and NGFR (via extracellular domains). The NGF precursor (proNGF) has much higher affinity for SORCS2 than mature NGF. The NGF precursor (proNGF) has much higher affinity for SORT1 than mature NGF (By similarity). Interacts with ADAM10 in a divalent cation-dependent manner (By similarity). Interacts with SORCS3 (By similarity).</text>
</comment>
<comment type="subcellular location">
    <subcellularLocation>
        <location evidence="1">Secreted</location>
    </subcellularLocation>
    <subcellularLocation>
        <location evidence="2">Endosome lumen</location>
    </subcellularLocation>
    <text evidence="2">ProNGF is endocytosed after binding to the cell surface receptor formed by SORT1 and NGFR.</text>
</comment>
<comment type="tissue specificity">
    <text evidence="4">Detected in the granule and pyramidal cell layer in the hippocampus.</text>
</comment>
<comment type="similarity">
    <text evidence="5">Belongs to the NGF-beta family.</text>
</comment>
<comment type="sequence caution" evidence="5">
    <conflict type="erroneous initiation">
        <sequence resource="EMBL-CDS" id="AAA41697"/>
    </conflict>
    <text>Extended N-terminus.</text>
</comment>
<gene>
    <name type="primary">Ngf</name>
    <name type="synonym">Ngfb</name>
</gene>
<organism>
    <name type="scientific">Rattus norvegicus</name>
    <name type="common">Rat</name>
    <dbReference type="NCBI Taxonomy" id="10116"/>
    <lineage>
        <taxon>Eukaryota</taxon>
        <taxon>Metazoa</taxon>
        <taxon>Chordata</taxon>
        <taxon>Craniata</taxon>
        <taxon>Vertebrata</taxon>
        <taxon>Euteleostomi</taxon>
        <taxon>Mammalia</taxon>
        <taxon>Eutheria</taxon>
        <taxon>Euarchontoglires</taxon>
        <taxon>Glires</taxon>
        <taxon>Rodentia</taxon>
        <taxon>Myomorpha</taxon>
        <taxon>Muroidea</taxon>
        <taxon>Muridae</taxon>
        <taxon>Murinae</taxon>
        <taxon>Rattus</taxon>
    </lineage>
</organism>
<accession>P25427</accession>
<proteinExistence type="evidence at transcript level"/>